<organism>
    <name type="scientific">White bream virus (isolate Blicca bjoerkna L./Germany/DF24/00)</name>
    <name type="common">WBV</name>
    <dbReference type="NCBI Taxonomy" id="766180"/>
    <lineage>
        <taxon>Viruses</taxon>
        <taxon>Riboviria</taxon>
        <taxon>Orthornavirae</taxon>
        <taxon>Pisuviricota</taxon>
        <taxon>Pisoniviricetes</taxon>
        <taxon>Nidovirales</taxon>
        <taxon>Tornidovirineae</taxon>
        <taxon>Tobaniviridae</taxon>
        <taxon>Piscanivirinae</taxon>
        <taxon>Bafinivirus</taxon>
        <taxon>Blicbavirus</taxon>
        <taxon>White bream virus</taxon>
    </lineage>
</organism>
<gene>
    <name type="primary">M</name>
</gene>
<reference key="1">
    <citation type="journal article" date="2006" name="J. Virol.">
        <title>Characterization of White bream virus reveals a novel genetic cluster of nidoviruses.</title>
        <authorList>
            <person name="Schuetze H."/>
            <person name="Ulferts R."/>
            <person name="Schelle B."/>
            <person name="Bayer S."/>
            <person name="Granzow H."/>
            <person name="Hoffmann B."/>
            <person name="Mettenleiter T.C."/>
            <person name="Ziebuhr J."/>
        </authorList>
    </citation>
    <scope>NUCLEOTIDE SEQUENCE [GENOMIC RNA]</scope>
</reference>
<evidence type="ECO:0000250" key="1"/>
<evidence type="ECO:0000255" key="2"/>
<evidence type="ECO:0000305" key="3"/>
<comment type="function">
    <text evidence="1">Component of the viral envelope that plays a central role in virus morphogenesis and assembly via its interactions with other viral proteins.</text>
</comment>
<comment type="subunit">
    <text evidence="1">Interacts with many viral proteins in infected cells. Interacts with envelope E protein in the budding compartment of the host cell, which is located between endoplasmic reticulum and the Golgi complex. Forms a complex with HE and S proteins. Interacts with nucleocapsid N protein. This interaction probably participates in the viral mRNA packaging into the virus (By similarity).</text>
</comment>
<comment type="subcellular location">
    <subcellularLocation>
        <location evidence="3">Virion membrane</location>
        <topology evidence="3">Multi-pass membrane protein</topology>
    </subcellularLocation>
    <subcellularLocation>
        <location evidence="3">Host Golgi apparatus membrane</location>
        <topology evidence="3">Multi-pass membrane protein</topology>
    </subcellularLocation>
</comment>
<comment type="similarity">
    <text evidence="3">Belongs to the torovirinae M protein family.</text>
</comment>
<protein>
    <recommendedName>
        <fullName>Membrane protein</fullName>
        <shortName>M protein</shortName>
    </recommendedName>
    <alternativeName>
        <fullName>E1 glycoprotein</fullName>
    </alternativeName>
    <alternativeName>
        <fullName>Matrix glycoprotein</fullName>
    </alternativeName>
    <alternativeName>
        <fullName>Membrane glycoprotein</fullName>
    </alternativeName>
</protein>
<proteinExistence type="inferred from homology"/>
<name>VME1_WBV24</name>
<sequence>MSANQSQSISGALSQLTSSNSFYGGNVDILSSLLQFNLMWASVFLLAIHLLVNTLVYYIPFVGRLPMVGTINNLIWFVATLLLIILVYVASDNIIVKAFGGILVLLLLLSVIILLYKSTMFFITLYYHQSFMVAARGPTVLSVNGSHYSLDFIPSAVIITTRQGKCFYNGHDLGSCSADSCSVILFSGRYRSEFEVHRNSPKKLTVDVCGYTTLLTVYTPKASKTDV</sequence>
<accession>Q008X3</accession>
<dbReference type="EMBL" id="DQ898157">
    <property type="protein sequence ID" value="ABI97396.1"/>
    <property type="molecule type" value="Genomic_RNA"/>
</dbReference>
<dbReference type="RefSeq" id="YP_803216.1">
    <property type="nucleotide sequence ID" value="NC_008516.1"/>
</dbReference>
<dbReference type="GlyCosmos" id="Q008X3">
    <property type="glycosylation" value="1 site, No reported glycans"/>
</dbReference>
<dbReference type="GeneID" id="4443110"/>
<dbReference type="KEGG" id="vg:4443110"/>
<dbReference type="Proteomes" id="UP000000680">
    <property type="component" value="Segment"/>
</dbReference>
<dbReference type="GO" id="GO:0044178">
    <property type="term" value="C:host cell Golgi membrane"/>
    <property type="evidence" value="ECO:0007669"/>
    <property type="project" value="UniProtKB-SubCell"/>
</dbReference>
<dbReference type="GO" id="GO:0016020">
    <property type="term" value="C:membrane"/>
    <property type="evidence" value="ECO:0007669"/>
    <property type="project" value="UniProtKB-KW"/>
</dbReference>
<dbReference type="GO" id="GO:0019031">
    <property type="term" value="C:viral envelope"/>
    <property type="evidence" value="ECO:0007669"/>
    <property type="project" value="UniProtKB-KW"/>
</dbReference>
<dbReference type="GO" id="GO:0055036">
    <property type="term" value="C:virion membrane"/>
    <property type="evidence" value="ECO:0007669"/>
    <property type="project" value="UniProtKB-SubCell"/>
</dbReference>
<dbReference type="GO" id="GO:0039660">
    <property type="term" value="F:structural constituent of virion"/>
    <property type="evidence" value="ECO:0007669"/>
    <property type="project" value="UniProtKB-KW"/>
</dbReference>
<keyword id="KW-0325">Glycoprotein</keyword>
<keyword id="KW-1040">Host Golgi apparatus</keyword>
<keyword id="KW-1043">Host membrane</keyword>
<keyword id="KW-0472">Membrane</keyword>
<keyword id="KW-1185">Reference proteome</keyword>
<keyword id="KW-0812">Transmembrane</keyword>
<keyword id="KW-1133">Transmembrane helix</keyword>
<keyword id="KW-0261">Viral envelope protein</keyword>
<keyword id="KW-0468">Viral matrix protein</keyword>
<keyword id="KW-0946">Virion</keyword>
<feature type="chain" id="PRO_0000408905" description="Membrane protein">
    <location>
        <begin position="1"/>
        <end position="227"/>
    </location>
</feature>
<feature type="topological domain" description="Virion surface" evidence="2">
    <location>
        <begin position="1"/>
        <end position="42"/>
    </location>
</feature>
<feature type="transmembrane region" description="Helical" evidence="2">
    <location>
        <begin position="43"/>
        <end position="63"/>
    </location>
</feature>
<feature type="topological domain" description="Intravirion" evidence="2">
    <location>
        <begin position="64"/>
        <end position="66"/>
    </location>
</feature>
<feature type="transmembrane region" description="Helical" evidence="2">
    <location>
        <begin position="67"/>
        <end position="87"/>
    </location>
</feature>
<feature type="topological domain" description="Virion surface" evidence="2">
    <location>
        <begin position="88"/>
        <end position="95"/>
    </location>
</feature>
<feature type="transmembrane region" description="Helical" evidence="2">
    <location>
        <begin position="96"/>
        <end position="116"/>
    </location>
</feature>
<feature type="topological domain" description="Intravirion" evidence="2">
    <location>
        <begin position="117"/>
        <end position="227"/>
    </location>
</feature>
<feature type="glycosylation site" description="N-linked (GlcNAc...) asparagine; by host" evidence="2">
    <location>
        <position position="4"/>
    </location>
</feature>
<organismHost>
    <name type="scientific">Blicca bjoerkna</name>
    <name type="common">white bream</name>
    <dbReference type="NCBI Taxonomy" id="58317"/>
</organismHost>